<organism>
    <name type="scientific">Salmonella paratyphi A (strain ATCC 9150 / SARB42)</name>
    <dbReference type="NCBI Taxonomy" id="295319"/>
    <lineage>
        <taxon>Bacteria</taxon>
        <taxon>Pseudomonadati</taxon>
        <taxon>Pseudomonadota</taxon>
        <taxon>Gammaproteobacteria</taxon>
        <taxon>Enterobacterales</taxon>
        <taxon>Enterobacteriaceae</taxon>
        <taxon>Salmonella</taxon>
    </lineage>
</organism>
<sequence>MRQLLPGDTVWRNIRLATMDPQRQAPYGLVDNQALIVREGHICDIVPETQLPVSGDNIHDMQGRLVTPGLIDCHTHLVFAGNRAAEWEQRLNGASYQHISAQGGGINATVSATRACAEETLYQLARERMMRLASEGVTLLEIKSGYGLELATEEKLLRVAAKLAAENAIDISPTLLAAHATPAEYRDDPDGYITLVCETMIPQLWKKGLFDAVDLFCESVGFNVAQSERVLQTAKALGIPVKGHVEQLSLLGGAQLVSRYQGLSADHIEYLDEAGVAAMRDGGTVGVLLPGAFYFLRETQHPPVELLRRYQVPVAVASDFNPGTSPFCSLHLAMNMACVQFGLTPEEAWAGVTRHAARALGRQATHGQLRAGYRADFVVWDAEQPVEIVYEPGRNPLYQRVYRGKIS</sequence>
<comment type="function">
    <text evidence="1">Catalyzes the hydrolytic cleavage of the carbon-nitrogen bond in imidazolone-5-propanoate to yield N-formimidoyl-L-glutamate. It is the third step in the universal histidine degradation pathway.</text>
</comment>
<comment type="catalytic activity">
    <reaction evidence="1">
        <text>4-imidazolone-5-propanoate + H2O = N-formimidoyl-L-glutamate</text>
        <dbReference type="Rhea" id="RHEA:23660"/>
        <dbReference type="ChEBI" id="CHEBI:15377"/>
        <dbReference type="ChEBI" id="CHEBI:58928"/>
        <dbReference type="ChEBI" id="CHEBI:77893"/>
        <dbReference type="EC" id="3.5.2.7"/>
    </reaction>
</comment>
<comment type="cofactor">
    <cofactor evidence="1">
        <name>Zn(2+)</name>
        <dbReference type="ChEBI" id="CHEBI:29105"/>
    </cofactor>
    <cofactor evidence="1">
        <name>Fe(3+)</name>
        <dbReference type="ChEBI" id="CHEBI:29034"/>
    </cofactor>
    <text evidence="1">Binds 1 zinc or iron ion per subunit.</text>
</comment>
<comment type="pathway">
    <text evidence="1">Amino-acid degradation; L-histidine degradation into L-glutamate; N-formimidoyl-L-glutamate from L-histidine: step 3/3.</text>
</comment>
<comment type="subcellular location">
    <subcellularLocation>
        <location evidence="1">Cytoplasm</location>
    </subcellularLocation>
</comment>
<comment type="similarity">
    <text evidence="1">Belongs to the metallo-dependent hydrolases superfamily. HutI family.</text>
</comment>
<accession>Q5PG58</accession>
<protein>
    <recommendedName>
        <fullName evidence="1">Imidazolonepropionase</fullName>
        <ecNumber evidence="1">3.5.2.7</ecNumber>
    </recommendedName>
    <alternativeName>
        <fullName evidence="1">Imidazolone-5-propionate hydrolase</fullName>
    </alternativeName>
</protein>
<name>HUTI_SALPA</name>
<reference key="1">
    <citation type="journal article" date="2004" name="Nat. Genet.">
        <title>Comparison of genome degradation in Paratyphi A and Typhi, human-restricted serovars of Salmonella enterica that cause typhoid.</title>
        <authorList>
            <person name="McClelland M."/>
            <person name="Sanderson K.E."/>
            <person name="Clifton S.W."/>
            <person name="Latreille P."/>
            <person name="Porwollik S."/>
            <person name="Sabo A."/>
            <person name="Meyer R."/>
            <person name="Bieri T."/>
            <person name="Ozersky P."/>
            <person name="McLellan M."/>
            <person name="Harkins C.R."/>
            <person name="Wang C."/>
            <person name="Nguyen C."/>
            <person name="Berghoff A."/>
            <person name="Elliott G."/>
            <person name="Kohlberg S."/>
            <person name="Strong C."/>
            <person name="Du F."/>
            <person name="Carter J."/>
            <person name="Kremizki C."/>
            <person name="Layman D."/>
            <person name="Leonard S."/>
            <person name="Sun H."/>
            <person name="Fulton L."/>
            <person name="Nash W."/>
            <person name="Miner T."/>
            <person name="Minx P."/>
            <person name="Delehaunty K."/>
            <person name="Fronick C."/>
            <person name="Magrini V."/>
            <person name="Nhan M."/>
            <person name="Warren W."/>
            <person name="Florea L."/>
            <person name="Spieth J."/>
            <person name="Wilson R.K."/>
        </authorList>
    </citation>
    <scope>NUCLEOTIDE SEQUENCE [LARGE SCALE GENOMIC DNA]</scope>
    <source>
        <strain>ATCC 9150 / SARB42</strain>
    </source>
</reference>
<dbReference type="EC" id="3.5.2.7" evidence="1"/>
<dbReference type="EMBL" id="CP000026">
    <property type="protein sequence ID" value="AAV77873.1"/>
    <property type="molecule type" value="Genomic_DNA"/>
</dbReference>
<dbReference type="RefSeq" id="WP_001249488.1">
    <property type="nucleotide sequence ID" value="NC_006511.1"/>
</dbReference>
<dbReference type="SMR" id="Q5PG58"/>
<dbReference type="KEGG" id="spt:SPA1965"/>
<dbReference type="HOGENOM" id="CLU_041647_0_0_6"/>
<dbReference type="UniPathway" id="UPA00379">
    <property type="reaction ID" value="UER00551"/>
</dbReference>
<dbReference type="Proteomes" id="UP000008185">
    <property type="component" value="Chromosome"/>
</dbReference>
<dbReference type="GO" id="GO:0005737">
    <property type="term" value="C:cytoplasm"/>
    <property type="evidence" value="ECO:0007669"/>
    <property type="project" value="UniProtKB-SubCell"/>
</dbReference>
<dbReference type="GO" id="GO:0050480">
    <property type="term" value="F:imidazolonepropionase activity"/>
    <property type="evidence" value="ECO:0007669"/>
    <property type="project" value="UniProtKB-UniRule"/>
</dbReference>
<dbReference type="GO" id="GO:0005506">
    <property type="term" value="F:iron ion binding"/>
    <property type="evidence" value="ECO:0007669"/>
    <property type="project" value="UniProtKB-UniRule"/>
</dbReference>
<dbReference type="GO" id="GO:0008270">
    <property type="term" value="F:zinc ion binding"/>
    <property type="evidence" value="ECO:0007669"/>
    <property type="project" value="UniProtKB-UniRule"/>
</dbReference>
<dbReference type="GO" id="GO:0019556">
    <property type="term" value="P:L-histidine catabolic process to glutamate and formamide"/>
    <property type="evidence" value="ECO:0007669"/>
    <property type="project" value="UniProtKB-UniPathway"/>
</dbReference>
<dbReference type="GO" id="GO:0019557">
    <property type="term" value="P:L-histidine catabolic process to glutamate and formate"/>
    <property type="evidence" value="ECO:0007669"/>
    <property type="project" value="UniProtKB-UniPathway"/>
</dbReference>
<dbReference type="CDD" id="cd01296">
    <property type="entry name" value="Imidazolone-5PH"/>
    <property type="match status" value="1"/>
</dbReference>
<dbReference type="FunFam" id="3.20.20.140:FF:000007">
    <property type="entry name" value="Imidazolonepropionase"/>
    <property type="match status" value="1"/>
</dbReference>
<dbReference type="Gene3D" id="3.20.20.140">
    <property type="entry name" value="Metal-dependent hydrolases"/>
    <property type="match status" value="1"/>
</dbReference>
<dbReference type="Gene3D" id="2.30.40.10">
    <property type="entry name" value="Urease, subunit C, domain 1"/>
    <property type="match status" value="1"/>
</dbReference>
<dbReference type="HAMAP" id="MF_00372">
    <property type="entry name" value="HutI"/>
    <property type="match status" value="1"/>
</dbReference>
<dbReference type="InterPro" id="IPR006680">
    <property type="entry name" value="Amidohydro-rel"/>
</dbReference>
<dbReference type="InterPro" id="IPR005920">
    <property type="entry name" value="HutI"/>
</dbReference>
<dbReference type="InterPro" id="IPR011059">
    <property type="entry name" value="Metal-dep_hydrolase_composite"/>
</dbReference>
<dbReference type="InterPro" id="IPR032466">
    <property type="entry name" value="Metal_Hydrolase"/>
</dbReference>
<dbReference type="NCBIfam" id="TIGR01224">
    <property type="entry name" value="hutI"/>
    <property type="match status" value="1"/>
</dbReference>
<dbReference type="PANTHER" id="PTHR42752">
    <property type="entry name" value="IMIDAZOLONEPROPIONASE"/>
    <property type="match status" value="1"/>
</dbReference>
<dbReference type="PANTHER" id="PTHR42752:SF1">
    <property type="entry name" value="IMIDAZOLONEPROPIONASE-RELATED"/>
    <property type="match status" value="1"/>
</dbReference>
<dbReference type="Pfam" id="PF01979">
    <property type="entry name" value="Amidohydro_1"/>
    <property type="match status" value="1"/>
</dbReference>
<dbReference type="SUPFAM" id="SSF51338">
    <property type="entry name" value="Composite domain of metallo-dependent hydrolases"/>
    <property type="match status" value="1"/>
</dbReference>
<dbReference type="SUPFAM" id="SSF51556">
    <property type="entry name" value="Metallo-dependent hydrolases"/>
    <property type="match status" value="1"/>
</dbReference>
<gene>
    <name evidence="1" type="primary">hutI</name>
    <name type="ordered locus">SPA1965</name>
</gene>
<proteinExistence type="inferred from homology"/>
<evidence type="ECO:0000255" key="1">
    <source>
        <dbReference type="HAMAP-Rule" id="MF_00372"/>
    </source>
</evidence>
<feature type="chain" id="PRO_0000306505" description="Imidazolonepropionase">
    <location>
        <begin position="1"/>
        <end position="407"/>
    </location>
</feature>
<feature type="binding site" evidence="1">
    <location>
        <position position="74"/>
    </location>
    <ligand>
        <name>Fe(3+)</name>
        <dbReference type="ChEBI" id="CHEBI:29034"/>
    </ligand>
</feature>
<feature type="binding site" evidence="1">
    <location>
        <position position="74"/>
    </location>
    <ligand>
        <name>Zn(2+)</name>
        <dbReference type="ChEBI" id="CHEBI:29105"/>
    </ligand>
</feature>
<feature type="binding site" evidence="1">
    <location>
        <position position="76"/>
    </location>
    <ligand>
        <name>Fe(3+)</name>
        <dbReference type="ChEBI" id="CHEBI:29034"/>
    </ligand>
</feature>
<feature type="binding site" evidence="1">
    <location>
        <position position="76"/>
    </location>
    <ligand>
        <name>Zn(2+)</name>
        <dbReference type="ChEBI" id="CHEBI:29105"/>
    </ligand>
</feature>
<feature type="binding site" evidence="1">
    <location>
        <position position="83"/>
    </location>
    <ligand>
        <name>4-imidazolone-5-propanoate</name>
        <dbReference type="ChEBI" id="CHEBI:77893"/>
    </ligand>
</feature>
<feature type="binding site" evidence="1">
    <location>
        <position position="146"/>
    </location>
    <ligand>
        <name>4-imidazolone-5-propanoate</name>
        <dbReference type="ChEBI" id="CHEBI:77893"/>
    </ligand>
</feature>
<feature type="binding site" evidence="1">
    <location>
        <position position="146"/>
    </location>
    <ligand>
        <name>N-formimidoyl-L-glutamate</name>
        <dbReference type="ChEBI" id="CHEBI:58928"/>
    </ligand>
</feature>
<feature type="binding site" evidence="1">
    <location>
        <position position="179"/>
    </location>
    <ligand>
        <name>4-imidazolone-5-propanoate</name>
        <dbReference type="ChEBI" id="CHEBI:77893"/>
    </ligand>
</feature>
<feature type="binding site" evidence="1">
    <location>
        <position position="244"/>
    </location>
    <ligand>
        <name>Fe(3+)</name>
        <dbReference type="ChEBI" id="CHEBI:29034"/>
    </ligand>
</feature>
<feature type="binding site" evidence="1">
    <location>
        <position position="244"/>
    </location>
    <ligand>
        <name>Zn(2+)</name>
        <dbReference type="ChEBI" id="CHEBI:29105"/>
    </ligand>
</feature>
<feature type="binding site" evidence="1">
    <location>
        <position position="247"/>
    </location>
    <ligand>
        <name>4-imidazolone-5-propanoate</name>
        <dbReference type="ChEBI" id="CHEBI:77893"/>
    </ligand>
</feature>
<feature type="binding site" evidence="1">
    <location>
        <position position="319"/>
    </location>
    <ligand>
        <name>Fe(3+)</name>
        <dbReference type="ChEBI" id="CHEBI:29034"/>
    </ligand>
</feature>
<feature type="binding site" evidence="1">
    <location>
        <position position="319"/>
    </location>
    <ligand>
        <name>Zn(2+)</name>
        <dbReference type="ChEBI" id="CHEBI:29105"/>
    </ligand>
</feature>
<feature type="binding site" evidence="1">
    <location>
        <position position="321"/>
    </location>
    <ligand>
        <name>N-formimidoyl-L-glutamate</name>
        <dbReference type="ChEBI" id="CHEBI:58928"/>
    </ligand>
</feature>
<feature type="binding site" evidence="1">
    <location>
        <position position="323"/>
    </location>
    <ligand>
        <name>N-formimidoyl-L-glutamate</name>
        <dbReference type="ChEBI" id="CHEBI:58928"/>
    </ligand>
</feature>
<feature type="binding site" evidence="1">
    <location>
        <position position="324"/>
    </location>
    <ligand>
        <name>4-imidazolone-5-propanoate</name>
        <dbReference type="ChEBI" id="CHEBI:77893"/>
    </ligand>
</feature>
<keyword id="KW-0963">Cytoplasm</keyword>
<keyword id="KW-0369">Histidine metabolism</keyword>
<keyword id="KW-0378">Hydrolase</keyword>
<keyword id="KW-0408">Iron</keyword>
<keyword id="KW-0479">Metal-binding</keyword>
<keyword id="KW-0862">Zinc</keyword>